<name>NADE_CHLPB</name>
<feature type="chain" id="PRO_1000099016" description="NH(3)-dependent NAD(+) synthetase">
    <location>
        <begin position="1"/>
        <end position="277"/>
    </location>
</feature>
<feature type="binding site" evidence="1">
    <location>
        <begin position="36"/>
        <end position="43"/>
    </location>
    <ligand>
        <name>ATP</name>
        <dbReference type="ChEBI" id="CHEBI:30616"/>
    </ligand>
</feature>
<feature type="binding site" evidence="1">
    <location>
        <position position="42"/>
    </location>
    <ligand>
        <name>Mg(2+)</name>
        <dbReference type="ChEBI" id="CHEBI:18420"/>
    </ligand>
</feature>
<feature type="binding site" evidence="1">
    <location>
        <position position="118"/>
    </location>
    <ligand>
        <name>deamido-NAD(+)</name>
        <dbReference type="ChEBI" id="CHEBI:58437"/>
    </ligand>
</feature>
<feature type="binding site" evidence="1">
    <location>
        <position position="138"/>
    </location>
    <ligand>
        <name>ATP</name>
        <dbReference type="ChEBI" id="CHEBI:30616"/>
    </ligand>
</feature>
<feature type="binding site" evidence="1">
    <location>
        <position position="143"/>
    </location>
    <ligand>
        <name>Mg(2+)</name>
        <dbReference type="ChEBI" id="CHEBI:18420"/>
    </ligand>
</feature>
<feature type="binding site" evidence="1">
    <location>
        <position position="167"/>
    </location>
    <ligand>
        <name>ATP</name>
        <dbReference type="ChEBI" id="CHEBI:30616"/>
    </ligand>
</feature>
<feature type="binding site" evidence="1">
    <location>
        <position position="189"/>
    </location>
    <ligand>
        <name>ATP</name>
        <dbReference type="ChEBI" id="CHEBI:30616"/>
    </ligand>
</feature>
<protein>
    <recommendedName>
        <fullName evidence="1">NH(3)-dependent NAD(+) synthetase</fullName>
        <ecNumber evidence="1">6.3.1.5</ecNumber>
    </recommendedName>
</protein>
<gene>
    <name evidence="1" type="primary">nadE</name>
    <name type="ordered locus">Cphamn1_1813</name>
</gene>
<reference key="1">
    <citation type="submission" date="2008-06" db="EMBL/GenBank/DDBJ databases">
        <title>Complete sequence of Chlorobium phaeobacteroides BS1.</title>
        <authorList>
            <consortium name="US DOE Joint Genome Institute"/>
            <person name="Lucas S."/>
            <person name="Copeland A."/>
            <person name="Lapidus A."/>
            <person name="Glavina del Rio T."/>
            <person name="Dalin E."/>
            <person name="Tice H."/>
            <person name="Bruce D."/>
            <person name="Goodwin L."/>
            <person name="Pitluck S."/>
            <person name="Schmutz J."/>
            <person name="Larimer F."/>
            <person name="Land M."/>
            <person name="Hauser L."/>
            <person name="Kyrpides N."/>
            <person name="Ovchinnikova G."/>
            <person name="Li T."/>
            <person name="Liu Z."/>
            <person name="Zhao F."/>
            <person name="Overmann J."/>
            <person name="Bryant D.A."/>
            <person name="Richardson P."/>
        </authorList>
    </citation>
    <scope>NUCLEOTIDE SEQUENCE [LARGE SCALE GENOMIC DNA]</scope>
    <source>
        <strain>BS1</strain>
    </source>
</reference>
<organism>
    <name type="scientific">Chlorobium phaeobacteroides (strain BS1)</name>
    <dbReference type="NCBI Taxonomy" id="331678"/>
    <lineage>
        <taxon>Bacteria</taxon>
        <taxon>Pseudomonadati</taxon>
        <taxon>Chlorobiota</taxon>
        <taxon>Chlorobiia</taxon>
        <taxon>Chlorobiales</taxon>
        <taxon>Chlorobiaceae</taxon>
        <taxon>Chlorobium/Pelodictyon group</taxon>
        <taxon>Chlorobium</taxon>
    </lineage>
</organism>
<accession>B3ELE3</accession>
<comment type="function">
    <text evidence="1">Catalyzes the ATP-dependent amidation of deamido-NAD to form NAD. Uses ammonia as a nitrogen source.</text>
</comment>
<comment type="catalytic activity">
    <reaction evidence="1">
        <text>deamido-NAD(+) + NH4(+) + ATP = AMP + diphosphate + NAD(+) + H(+)</text>
        <dbReference type="Rhea" id="RHEA:21188"/>
        <dbReference type="ChEBI" id="CHEBI:15378"/>
        <dbReference type="ChEBI" id="CHEBI:28938"/>
        <dbReference type="ChEBI" id="CHEBI:30616"/>
        <dbReference type="ChEBI" id="CHEBI:33019"/>
        <dbReference type="ChEBI" id="CHEBI:57540"/>
        <dbReference type="ChEBI" id="CHEBI:58437"/>
        <dbReference type="ChEBI" id="CHEBI:456215"/>
        <dbReference type="EC" id="6.3.1.5"/>
    </reaction>
</comment>
<comment type="pathway">
    <text evidence="1">Cofactor biosynthesis; NAD(+) biosynthesis; NAD(+) from deamido-NAD(+) (ammonia route): step 1/1.</text>
</comment>
<comment type="subunit">
    <text evidence="1">Homodimer.</text>
</comment>
<comment type="similarity">
    <text evidence="1">Belongs to the NAD synthetase family.</text>
</comment>
<keyword id="KW-0067">ATP-binding</keyword>
<keyword id="KW-0436">Ligase</keyword>
<keyword id="KW-0460">Magnesium</keyword>
<keyword id="KW-0479">Metal-binding</keyword>
<keyword id="KW-0520">NAD</keyword>
<keyword id="KW-0547">Nucleotide-binding</keyword>
<dbReference type="EC" id="6.3.1.5" evidence="1"/>
<dbReference type="EMBL" id="CP001101">
    <property type="protein sequence ID" value="ACE04731.1"/>
    <property type="molecule type" value="Genomic_DNA"/>
</dbReference>
<dbReference type="SMR" id="B3ELE3"/>
<dbReference type="STRING" id="331678.Cphamn1_1813"/>
<dbReference type="KEGG" id="cpb:Cphamn1_1813"/>
<dbReference type="eggNOG" id="COG0171">
    <property type="taxonomic scope" value="Bacteria"/>
</dbReference>
<dbReference type="HOGENOM" id="CLU_059327_1_1_10"/>
<dbReference type="OrthoDB" id="9803818at2"/>
<dbReference type="UniPathway" id="UPA00253">
    <property type="reaction ID" value="UER00333"/>
</dbReference>
<dbReference type="GO" id="GO:0005737">
    <property type="term" value="C:cytoplasm"/>
    <property type="evidence" value="ECO:0007669"/>
    <property type="project" value="InterPro"/>
</dbReference>
<dbReference type="GO" id="GO:0005524">
    <property type="term" value="F:ATP binding"/>
    <property type="evidence" value="ECO:0007669"/>
    <property type="project" value="UniProtKB-UniRule"/>
</dbReference>
<dbReference type="GO" id="GO:0004359">
    <property type="term" value="F:glutaminase activity"/>
    <property type="evidence" value="ECO:0007669"/>
    <property type="project" value="InterPro"/>
</dbReference>
<dbReference type="GO" id="GO:0046872">
    <property type="term" value="F:metal ion binding"/>
    <property type="evidence" value="ECO:0007669"/>
    <property type="project" value="UniProtKB-KW"/>
</dbReference>
<dbReference type="GO" id="GO:0003952">
    <property type="term" value="F:NAD+ synthase (glutamine-hydrolyzing) activity"/>
    <property type="evidence" value="ECO:0007669"/>
    <property type="project" value="InterPro"/>
</dbReference>
<dbReference type="GO" id="GO:0008795">
    <property type="term" value="F:NAD+ synthase activity"/>
    <property type="evidence" value="ECO:0007669"/>
    <property type="project" value="UniProtKB-UniRule"/>
</dbReference>
<dbReference type="GO" id="GO:0009435">
    <property type="term" value="P:NAD biosynthetic process"/>
    <property type="evidence" value="ECO:0007669"/>
    <property type="project" value="UniProtKB-UniRule"/>
</dbReference>
<dbReference type="CDD" id="cd00553">
    <property type="entry name" value="NAD_synthase"/>
    <property type="match status" value="1"/>
</dbReference>
<dbReference type="FunFam" id="3.40.50.620:FF:000106">
    <property type="entry name" value="Glutamine-dependent NAD(+) synthetase"/>
    <property type="match status" value="1"/>
</dbReference>
<dbReference type="Gene3D" id="3.40.50.620">
    <property type="entry name" value="HUPs"/>
    <property type="match status" value="1"/>
</dbReference>
<dbReference type="HAMAP" id="MF_00193">
    <property type="entry name" value="NadE_ammonia_dep"/>
    <property type="match status" value="1"/>
</dbReference>
<dbReference type="InterPro" id="IPR022310">
    <property type="entry name" value="NAD/GMP_synthase"/>
</dbReference>
<dbReference type="InterPro" id="IPR003694">
    <property type="entry name" value="NAD_synthase"/>
</dbReference>
<dbReference type="InterPro" id="IPR022926">
    <property type="entry name" value="NH(3)-dep_NAD(+)_synth"/>
</dbReference>
<dbReference type="InterPro" id="IPR014729">
    <property type="entry name" value="Rossmann-like_a/b/a_fold"/>
</dbReference>
<dbReference type="NCBIfam" id="TIGR00552">
    <property type="entry name" value="nadE"/>
    <property type="match status" value="1"/>
</dbReference>
<dbReference type="NCBIfam" id="NF010587">
    <property type="entry name" value="PRK13980.1"/>
    <property type="match status" value="1"/>
</dbReference>
<dbReference type="PANTHER" id="PTHR23090:SF9">
    <property type="entry name" value="GLUTAMINE-DEPENDENT NAD(+) SYNTHETASE"/>
    <property type="match status" value="1"/>
</dbReference>
<dbReference type="PANTHER" id="PTHR23090">
    <property type="entry name" value="NH 3 /GLUTAMINE-DEPENDENT NAD + SYNTHETASE"/>
    <property type="match status" value="1"/>
</dbReference>
<dbReference type="Pfam" id="PF02540">
    <property type="entry name" value="NAD_synthase"/>
    <property type="match status" value="1"/>
</dbReference>
<dbReference type="SUPFAM" id="SSF52402">
    <property type="entry name" value="Adenine nucleotide alpha hydrolases-like"/>
    <property type="match status" value="1"/>
</dbReference>
<evidence type="ECO:0000255" key="1">
    <source>
        <dbReference type="HAMAP-Rule" id="MF_00193"/>
    </source>
</evidence>
<proteinExistence type="inferred from homology"/>
<sequence>MNTQCLHLNYALVEDILLAFIRNEIRKFGFRSAVFGLSGGIDSAVVCELAKRALGPENVLAVLMPYRTSSPESVNDARLMVEKTGVRSEEVEITGVVDAFFDGVSGAGNLRMGNVMARARMLYLYDISARDGRLVIGTSNKTELLLGYGTLFGDMASAVNPIGDLYKTQLWGLARHLQIPEELVSKIPSADLWEGQSDEADLGFGYGEVDLLLYMMLEKRMSRSDIIEAGIEESFYDKVRKMVVRNQYKRMMPVIAKISARTPGIDFRYARDWQEVK</sequence>